<name>ASAC_ASPFN</name>
<comment type="function">
    <text evidence="5">Nonribosomal peptide synthetase; part of the gene cluster that mediates the biosynthesis of aspergillic acid, a hydroxamic acid-containing pyrazinone with aliphatic side chains that originates from leucine (Leu) and isoleucine (Ile) (PubMed:29674152). Aspergillic acid has antibiotic properties and was shown to be lethal to mice (PubMed:29674152). The first step in the pathway is the production of deoxyaspergillic acid via a condensation between the Ile amine and the Leu carboxylic acid, followed by a reductive release from the protein forming the dipeptide aldehyde NH(2)-Leu-Ile-CHO, which could undergo an intermolecular cyclization resulting in a dihydropyrazinone (PubMed:29674152). As the NRPS asaC lacks a condensation domain, it is improbable that it is responsible for condensation of Leu and Ile (PubMed:29674152). One possibility is that asaC acts on a previously condensed dipeptide and functions as a Leu-Ile reductase to yield deoxyaspergillic acid (PubMed:29674152). After asaC forms deoxyaspergillic acid, the cytochrome P450 asaD oxidizes the pyrazinone to the hydroxamic acid-containing bioactive metabolite aspergillic acid (PubMed:29674152). The hydroxylase/desaturase asaB can then convert aspergillic acid to hydroxyaspergillic acid (PubMed:29674152). Both aspergillic acid and hydroxyaspergillic acid can form complexes with iron producing ferriaspergillin analogs (PubMed:29674152).</text>
</comment>
<comment type="pathway">
    <text evidence="5">Secondary metabolite biosynthesis.</text>
</comment>
<comment type="induction">
    <text evidence="4">Expressed during the earliest stages of maize kernel infection (PubMed:23834374).</text>
</comment>
<comment type="domain">
    <text evidence="1 8">NRP synthetases are composed of discrete domains (adenylation (A), thiolation (T) or peptidyl carrier protein (PCP) and condensation (C) domains) which when grouped together are referred to as a single module (By similarity). Each module is responsible for the recognition (via the A domain) and incorporation of a single amino acid into the growing peptide product (By similarity). Thus, an NRP synthetase is generally composed of one or more modules and can terminate in a thioesterase domain (TE) that releases the newly synthesized peptide from the enzyme (By similarity). Occasionally, epimerase (E) domains (responsible for L- to D-amino acid conversion) are present within the NRP synthetase (By similarity). AsaC contains an amino acid adenylation domain (A), a peptidyl carrier protein (PCP) domain with a phosphopantetheine prosthetic group, and a short-chain dehydrogenase/reductase terminus (R), but it does not have an identifiable condensation (C) domain required for the formation of peptide bonds during non-ribosomal peptide synthesis (PubMed:29674152).</text>
</comment>
<comment type="disruption phenotype">
    <text evidence="5">Abolishes the production of ferriaspergillin and aspergillic acid (PubMed:29674152).</text>
</comment>
<comment type="similarity">
    <text evidence="7">Belongs to the NRP synthetase family.</text>
</comment>
<proteinExistence type="evidence at transcript level"/>
<reference key="1">
    <citation type="journal article" date="2015" name="Genome Announc.">
        <title>Genome sequence of Aspergillus flavus NRRL 3357, a strain that causes aflatoxin contamination of food and feed.</title>
        <authorList>
            <person name="Nierman W.C."/>
            <person name="Yu J."/>
            <person name="Fedorova-Abrams N.D."/>
            <person name="Losada L."/>
            <person name="Cleveland T.E."/>
            <person name="Bhatnagar D."/>
            <person name="Bennett J.W."/>
            <person name="Dean R."/>
            <person name="Payne G.A."/>
        </authorList>
    </citation>
    <scope>NUCLEOTIDE SEQUENCE [LARGE SCALE GENOMIC DNA]</scope>
    <source>
        <strain>ATCC 200026 / FGSC A1120 / IAM 13836 / NRRL 3357 / JCM 12722 / SRRC 167</strain>
    </source>
</reference>
<reference key="2">
    <citation type="journal article" date="2013" name="Mol. Plant Pathol.">
        <title>Localization, morphology and transcriptional profile of Aspergillus flavus during seed colonization.</title>
        <authorList>
            <person name="Dolezal A.L."/>
            <person name="Obrian G.R."/>
            <person name="Nielsen D.M."/>
            <person name="Woloshuk C.P."/>
            <person name="Boston R.S."/>
            <person name="Payne G.A."/>
        </authorList>
    </citation>
    <scope>IDENTIFICATION WITHIN THE CLUSTER</scope>
    <scope>INDUCTION</scope>
</reference>
<reference key="3">
    <citation type="journal article" date="2018" name="Fungal Genet. Biol.">
        <title>Identification and functional analysis of the aspergillic acid gene cluster in Aspergillus flavus.</title>
        <authorList>
            <person name="Lebar M.D."/>
            <person name="Cary J.W."/>
            <person name="Majumdar R."/>
            <person name="Carter-Wientjes C.H."/>
            <person name="Mack B.M."/>
            <person name="Wei Q."/>
            <person name="Uka V."/>
            <person name="De Saeger S."/>
            <person name="Diana Di Mavungu J."/>
        </authorList>
    </citation>
    <scope>FUNCTION</scope>
    <scope>DOMAIN</scope>
    <scope>DISRUPTION PHENOTYPE</scope>
    <scope>PATHWAY</scope>
</reference>
<protein>
    <recommendedName>
        <fullName evidence="6">Nonribosomal peptide synthetase asaC</fullName>
        <shortName evidence="6">NRPS asaC</shortName>
        <ecNumber evidence="5">6.3.2.-</ecNumber>
    </recommendedName>
    <alternativeName>
        <fullName evidence="6">Aspergillic acid biosynthesis cluster protein C</fullName>
    </alternativeName>
</protein>
<gene>
    <name evidence="6" type="primary">asaC</name>
    <name type="ORF">AFLA_023020</name>
</gene>
<sequence>MSIFSSISSLGLEACYRHHVRTSPNATAVVDGDQSMTYRELETRVNDLASILGRENIEEEEPIGILVPMGIAHVVAQAAVLRLGGSCVPMDLSFPDQRINDLLRALKTRIVLTVESEKARFAEFQTILVDSKYANLHQNGYHEDTIPAVETGRNHRTHILHTSGTTGLPKPVEIMSKGITRMAFNTQCVEFKSTDRVAQISAPSFDAALFEIWTTLARGAAIVLLPKNVVIDPVALHDSLRKYRITSILVTTALLNHVVSAIPNAFEDLDYVLTGGEAANPSVMQVILENGPPKKLVHAYGPTECTIITTYHLTTLEEVRRGQTPIGRPLDNTTVYILDDNLQPVKEGIVGELYIGGDAVARGYLGRPEANAKSFLEVSHLSKDGSPVRIYRSGDLVRMLDTGAIEFVARADNMVKIRGFRIEPAEIEGALLKSEMVQGTVVLPVHRPGKETYIVAFVIPKHDGAFSLEQLDEYLRRRLPAYMMPRLEAVASLPLTVHGKIDRVAVMKKHMEETKRAEQQVLISSNVKDAGDSVTWLRTLWTSVLGISNIDNEASFFHLGGSSLQAAALLVHIRRRFGLTLTMQQIYDSPTLLGLASVIDAGHAKSKVDHSRLGIFIADSQLAKDIPVLSKEAPDWRSPSEGKVFLTGATGFLGTYFLRELIDRPDVRSVKCLVRASDAHSARKRLLGALDKYGLGWADNLDKVTAIAGDLGKDLFGLSETEFHELALWTSVIFHVGAHVNYVQPYEKHRNTNVYGTLNCIKLATTGRTKALHYTSTAAVTGPVSHFTGADKIPEDVDLGEFQGWLPYDIGYTQSKWVSEQLIHSMIAKGLPAIVFRPGFIMGDSLRGKGNCDDFMCRVFIGSIKLGYRPILPNQSKIMIPVDFITTALLHITSNPYNFGRTFHLVPQTPEEDTDIETSWNMLKELGYDLKAVEYKDWLEILSKDKDLLTNPLLPMLPVLQEPVRKHLTRWELYEDMATYDVTNTRRSLADRGKLKSGIGLEDLRRHVEDWVARGLVPSRN</sequence>
<dbReference type="EC" id="6.3.2.-" evidence="5"/>
<dbReference type="EMBL" id="EQ963473">
    <property type="protein sequence ID" value="EED55031.1"/>
    <property type="molecule type" value="Genomic_DNA"/>
</dbReference>
<dbReference type="RefSeq" id="XP_002373813.1">
    <property type="nucleotide sequence ID" value="XM_002373772.1"/>
</dbReference>
<dbReference type="SMR" id="B8N0E8"/>
<dbReference type="STRING" id="332952.B8N0E8"/>
<dbReference type="EnsemblFungi" id="EED55031">
    <property type="protein sequence ID" value="EED55031"/>
    <property type="gene ID" value="AFLA_023020"/>
</dbReference>
<dbReference type="VEuPathDB" id="FungiDB:AFLA_000138"/>
<dbReference type="eggNOG" id="KOG1178">
    <property type="taxonomic scope" value="Eukaryota"/>
</dbReference>
<dbReference type="HOGENOM" id="CLU_000022_2_17_1"/>
<dbReference type="OMA" id="HRTHILH"/>
<dbReference type="GO" id="GO:0016874">
    <property type="term" value="F:ligase activity"/>
    <property type="evidence" value="ECO:0007669"/>
    <property type="project" value="UniProtKB-KW"/>
</dbReference>
<dbReference type="GO" id="GO:0016491">
    <property type="term" value="F:oxidoreductase activity"/>
    <property type="evidence" value="ECO:0007669"/>
    <property type="project" value="UniProtKB-KW"/>
</dbReference>
<dbReference type="GO" id="GO:0031177">
    <property type="term" value="F:phosphopantetheine binding"/>
    <property type="evidence" value="ECO:0007669"/>
    <property type="project" value="InterPro"/>
</dbReference>
<dbReference type="GO" id="GO:0009058">
    <property type="term" value="P:biosynthetic process"/>
    <property type="evidence" value="ECO:0007669"/>
    <property type="project" value="UniProtKB-ARBA"/>
</dbReference>
<dbReference type="CDD" id="cd05930">
    <property type="entry name" value="A_NRPS"/>
    <property type="match status" value="1"/>
</dbReference>
<dbReference type="CDD" id="cd05235">
    <property type="entry name" value="SDR_e1"/>
    <property type="match status" value="1"/>
</dbReference>
<dbReference type="Gene3D" id="3.30.300.30">
    <property type="match status" value="1"/>
</dbReference>
<dbReference type="Gene3D" id="3.40.50.980">
    <property type="match status" value="2"/>
</dbReference>
<dbReference type="Gene3D" id="1.10.1200.10">
    <property type="entry name" value="ACP-like"/>
    <property type="match status" value="1"/>
</dbReference>
<dbReference type="Gene3D" id="2.30.38.10">
    <property type="entry name" value="Luciferase, Domain 3"/>
    <property type="match status" value="1"/>
</dbReference>
<dbReference type="Gene3D" id="3.40.50.720">
    <property type="entry name" value="NAD(P)-binding Rossmann-like Domain"/>
    <property type="match status" value="1"/>
</dbReference>
<dbReference type="InterPro" id="IPR010071">
    <property type="entry name" value="AA_adenyl_dom"/>
</dbReference>
<dbReference type="InterPro" id="IPR036736">
    <property type="entry name" value="ACP-like_sf"/>
</dbReference>
<dbReference type="InterPro" id="IPR025110">
    <property type="entry name" value="AMP-bd_C"/>
</dbReference>
<dbReference type="InterPro" id="IPR045851">
    <property type="entry name" value="AMP-bd_C_sf"/>
</dbReference>
<dbReference type="InterPro" id="IPR020845">
    <property type="entry name" value="AMP-binding_CS"/>
</dbReference>
<dbReference type="InterPro" id="IPR000873">
    <property type="entry name" value="AMP-dep_synth/lig_dom"/>
</dbReference>
<dbReference type="InterPro" id="IPR013120">
    <property type="entry name" value="Far_NAD-bd"/>
</dbReference>
<dbReference type="InterPro" id="IPR036291">
    <property type="entry name" value="NAD(P)-bd_dom_sf"/>
</dbReference>
<dbReference type="InterPro" id="IPR020806">
    <property type="entry name" value="PKS_PP-bd"/>
</dbReference>
<dbReference type="InterPro" id="IPR009081">
    <property type="entry name" value="PP-bd_ACP"/>
</dbReference>
<dbReference type="InterPro" id="IPR006162">
    <property type="entry name" value="Ppantetheine_attach_site"/>
</dbReference>
<dbReference type="InterPro" id="IPR010080">
    <property type="entry name" value="Thioester_reductase-like_dom"/>
</dbReference>
<dbReference type="NCBIfam" id="TIGR01733">
    <property type="entry name" value="AA-adenyl-dom"/>
    <property type="match status" value="1"/>
</dbReference>
<dbReference type="NCBIfam" id="TIGR01746">
    <property type="entry name" value="Thioester-redct"/>
    <property type="match status" value="1"/>
</dbReference>
<dbReference type="PANTHER" id="PTHR44845:SF6">
    <property type="entry name" value="BETA-ALANINE-ACTIVATING ENZYME"/>
    <property type="match status" value="1"/>
</dbReference>
<dbReference type="PANTHER" id="PTHR44845">
    <property type="entry name" value="CARRIER DOMAIN-CONTAINING PROTEIN"/>
    <property type="match status" value="1"/>
</dbReference>
<dbReference type="Pfam" id="PF00501">
    <property type="entry name" value="AMP-binding"/>
    <property type="match status" value="1"/>
</dbReference>
<dbReference type="Pfam" id="PF13193">
    <property type="entry name" value="AMP-binding_C"/>
    <property type="match status" value="1"/>
</dbReference>
<dbReference type="Pfam" id="PF07993">
    <property type="entry name" value="NAD_binding_4"/>
    <property type="match status" value="1"/>
</dbReference>
<dbReference type="Pfam" id="PF00550">
    <property type="entry name" value="PP-binding"/>
    <property type="match status" value="1"/>
</dbReference>
<dbReference type="SMART" id="SM00823">
    <property type="entry name" value="PKS_PP"/>
    <property type="match status" value="1"/>
</dbReference>
<dbReference type="SUPFAM" id="SSF56801">
    <property type="entry name" value="Acetyl-CoA synthetase-like"/>
    <property type="match status" value="1"/>
</dbReference>
<dbReference type="SUPFAM" id="SSF47336">
    <property type="entry name" value="ACP-like"/>
    <property type="match status" value="1"/>
</dbReference>
<dbReference type="SUPFAM" id="SSF51735">
    <property type="entry name" value="NAD(P)-binding Rossmann-fold domains"/>
    <property type="match status" value="1"/>
</dbReference>
<dbReference type="PROSITE" id="PS00455">
    <property type="entry name" value="AMP_BINDING"/>
    <property type="match status" value="1"/>
</dbReference>
<dbReference type="PROSITE" id="PS50075">
    <property type="entry name" value="CARRIER"/>
    <property type="match status" value="1"/>
</dbReference>
<dbReference type="PROSITE" id="PS00012">
    <property type="entry name" value="PHOSPHOPANTETHEINE"/>
    <property type="match status" value="1"/>
</dbReference>
<evidence type="ECO:0000250" key="1">
    <source>
        <dbReference type="UniProtKB" id="Q4WAZ9"/>
    </source>
</evidence>
<evidence type="ECO:0000255" key="2"/>
<evidence type="ECO:0000255" key="3">
    <source>
        <dbReference type="PROSITE-ProRule" id="PRU00258"/>
    </source>
</evidence>
<evidence type="ECO:0000269" key="4">
    <source>
    </source>
</evidence>
<evidence type="ECO:0000269" key="5">
    <source>
    </source>
</evidence>
<evidence type="ECO:0000303" key="6">
    <source>
    </source>
</evidence>
<evidence type="ECO:0000305" key="7"/>
<evidence type="ECO:0000305" key="8">
    <source>
    </source>
</evidence>
<accession>B8N0E8</accession>
<organism>
    <name type="scientific">Aspergillus flavus (strain ATCC 200026 / FGSC A1120 / IAM 13836 / NRRL 3357 / JCM 12722 / SRRC 167)</name>
    <dbReference type="NCBI Taxonomy" id="332952"/>
    <lineage>
        <taxon>Eukaryota</taxon>
        <taxon>Fungi</taxon>
        <taxon>Dikarya</taxon>
        <taxon>Ascomycota</taxon>
        <taxon>Pezizomycotina</taxon>
        <taxon>Eurotiomycetes</taxon>
        <taxon>Eurotiomycetidae</taxon>
        <taxon>Eurotiales</taxon>
        <taxon>Aspergillaceae</taxon>
        <taxon>Aspergillus</taxon>
        <taxon>Aspergillus subgen. Circumdati</taxon>
    </lineage>
</organism>
<keyword id="KW-0436">Ligase</keyword>
<keyword id="KW-0511">Multifunctional enzyme</keyword>
<keyword id="KW-0560">Oxidoreductase</keyword>
<keyword id="KW-0596">Phosphopantetheine</keyword>
<keyword id="KW-0597">Phosphoprotein</keyword>
<feature type="chain" id="PRO_0000444455" description="Nonribosomal peptide synthetase asaC">
    <location>
        <begin position="1"/>
        <end position="1021"/>
    </location>
</feature>
<feature type="domain" description="Carrier" evidence="3 8">
    <location>
        <begin position="528"/>
        <end position="603"/>
    </location>
</feature>
<feature type="region of interest" description="Adenylation (A) domain" evidence="2 8">
    <location>
        <begin position="17"/>
        <end position="418"/>
    </location>
</feature>
<feature type="region of interest" description="short-chain dehydrogenase/reductase (R) domain" evidence="2 8">
    <location>
        <begin position="646"/>
        <end position="888"/>
    </location>
</feature>
<feature type="modified residue" description="O-(pantetheine 4'-phosphoryl)serine" evidence="3">
    <location>
        <position position="563"/>
    </location>
</feature>